<accession>Q67J17</accession>
<accession>A0A0P0XP25</accession>
<organism>
    <name type="scientific">Oryza sativa subsp. japonica</name>
    <name type="common">Rice</name>
    <dbReference type="NCBI Taxonomy" id="39947"/>
    <lineage>
        <taxon>Eukaryota</taxon>
        <taxon>Viridiplantae</taxon>
        <taxon>Streptophyta</taxon>
        <taxon>Embryophyta</taxon>
        <taxon>Tracheophyta</taxon>
        <taxon>Spermatophyta</taxon>
        <taxon>Magnoliopsida</taxon>
        <taxon>Liliopsida</taxon>
        <taxon>Poales</taxon>
        <taxon>Poaceae</taxon>
        <taxon>BOP clade</taxon>
        <taxon>Oryzoideae</taxon>
        <taxon>Oryzeae</taxon>
        <taxon>Oryzinae</taxon>
        <taxon>Oryza</taxon>
        <taxon>Oryza sativa</taxon>
    </lineage>
</organism>
<name>P2C69_ORYSJ</name>
<comment type="catalytic activity">
    <reaction>
        <text>O-phospho-L-seryl-[protein] + H2O = L-seryl-[protein] + phosphate</text>
        <dbReference type="Rhea" id="RHEA:20629"/>
        <dbReference type="Rhea" id="RHEA-COMP:9863"/>
        <dbReference type="Rhea" id="RHEA-COMP:11604"/>
        <dbReference type="ChEBI" id="CHEBI:15377"/>
        <dbReference type="ChEBI" id="CHEBI:29999"/>
        <dbReference type="ChEBI" id="CHEBI:43474"/>
        <dbReference type="ChEBI" id="CHEBI:83421"/>
        <dbReference type="EC" id="3.1.3.16"/>
    </reaction>
</comment>
<comment type="catalytic activity">
    <reaction>
        <text>O-phospho-L-threonyl-[protein] + H2O = L-threonyl-[protein] + phosphate</text>
        <dbReference type="Rhea" id="RHEA:47004"/>
        <dbReference type="Rhea" id="RHEA-COMP:11060"/>
        <dbReference type="Rhea" id="RHEA-COMP:11605"/>
        <dbReference type="ChEBI" id="CHEBI:15377"/>
        <dbReference type="ChEBI" id="CHEBI:30013"/>
        <dbReference type="ChEBI" id="CHEBI:43474"/>
        <dbReference type="ChEBI" id="CHEBI:61977"/>
        <dbReference type="EC" id="3.1.3.16"/>
    </reaction>
</comment>
<comment type="cofactor">
    <cofactor evidence="1">
        <name>Mg(2+)</name>
        <dbReference type="ChEBI" id="CHEBI:18420"/>
    </cofactor>
    <cofactor evidence="1">
        <name>Mn(2+)</name>
        <dbReference type="ChEBI" id="CHEBI:29035"/>
    </cofactor>
    <text evidence="1">Binds 2 magnesium or manganese ions per subunit.</text>
</comment>
<comment type="similarity">
    <text evidence="3">Belongs to the PP2C family.</text>
</comment>
<dbReference type="EC" id="3.1.3.16"/>
<dbReference type="EMBL" id="AP005891">
    <property type="protein sequence ID" value="BAD38388.1"/>
    <property type="molecule type" value="Genomic_DNA"/>
</dbReference>
<dbReference type="EMBL" id="AP006849">
    <property type="protein sequence ID" value="BAD38524.1"/>
    <property type="molecule type" value="Genomic_DNA"/>
</dbReference>
<dbReference type="EMBL" id="AP008215">
    <property type="protein sequence ID" value="BAF25296.1"/>
    <property type="molecule type" value="Genomic_DNA"/>
</dbReference>
<dbReference type="EMBL" id="AP014965">
    <property type="protein sequence ID" value="BAT08463.1"/>
    <property type="molecule type" value="Genomic_DNA"/>
</dbReference>
<dbReference type="EMBL" id="CM000146">
    <property type="protein sequence ID" value="EAZ45002.1"/>
    <property type="molecule type" value="Genomic_DNA"/>
</dbReference>
<dbReference type="EMBL" id="AK108735">
    <property type="status" value="NOT_ANNOTATED_CDS"/>
    <property type="molecule type" value="mRNA"/>
</dbReference>
<dbReference type="RefSeq" id="XP_015610946.1">
    <property type="nucleotide sequence ID" value="XM_015755460.1"/>
</dbReference>
<dbReference type="SMR" id="Q67J17"/>
<dbReference type="FunCoup" id="Q67J17">
    <property type="interactions" value="1"/>
</dbReference>
<dbReference type="STRING" id="39947.Q67J17"/>
<dbReference type="PaxDb" id="39947-Q67J17"/>
<dbReference type="EnsemblPlants" id="Os09t0459600-01">
    <property type="protein sequence ID" value="Os09t0459600-01"/>
    <property type="gene ID" value="Os09g0459600"/>
</dbReference>
<dbReference type="Gramene" id="Os09t0459600-01">
    <property type="protein sequence ID" value="Os09t0459600-01"/>
    <property type="gene ID" value="Os09g0459600"/>
</dbReference>
<dbReference type="KEGG" id="dosa:Os09g0459600"/>
<dbReference type="eggNOG" id="KOG0698">
    <property type="taxonomic scope" value="Eukaryota"/>
</dbReference>
<dbReference type="HOGENOM" id="CLU_013173_3_1_1"/>
<dbReference type="InParanoid" id="Q67J17"/>
<dbReference type="OMA" id="MFRRKHP"/>
<dbReference type="OrthoDB" id="10264738at2759"/>
<dbReference type="Proteomes" id="UP000000763">
    <property type="component" value="Chromosome 9"/>
</dbReference>
<dbReference type="Proteomes" id="UP000007752">
    <property type="component" value="Chromosome 9"/>
</dbReference>
<dbReference type="Proteomes" id="UP000059680">
    <property type="component" value="Chromosome 9"/>
</dbReference>
<dbReference type="GO" id="GO:0046872">
    <property type="term" value="F:metal ion binding"/>
    <property type="evidence" value="ECO:0007669"/>
    <property type="project" value="UniProtKB-KW"/>
</dbReference>
<dbReference type="GO" id="GO:0004722">
    <property type="term" value="F:protein serine/threonine phosphatase activity"/>
    <property type="evidence" value="ECO:0000318"/>
    <property type="project" value="GO_Central"/>
</dbReference>
<dbReference type="GO" id="GO:1902531">
    <property type="term" value="P:regulation of intracellular signal transduction"/>
    <property type="evidence" value="ECO:0000318"/>
    <property type="project" value="GO_Central"/>
</dbReference>
<dbReference type="CDD" id="cd00143">
    <property type="entry name" value="PP2Cc"/>
    <property type="match status" value="1"/>
</dbReference>
<dbReference type="FunFam" id="3.60.40.10:FF:000013">
    <property type="entry name" value="probable protein phosphatase 2C 5"/>
    <property type="match status" value="1"/>
</dbReference>
<dbReference type="Gene3D" id="3.60.40.10">
    <property type="entry name" value="PPM-type phosphatase domain"/>
    <property type="match status" value="1"/>
</dbReference>
<dbReference type="InterPro" id="IPR015655">
    <property type="entry name" value="PP2C"/>
</dbReference>
<dbReference type="InterPro" id="IPR036457">
    <property type="entry name" value="PPM-type-like_dom_sf"/>
</dbReference>
<dbReference type="InterPro" id="IPR001932">
    <property type="entry name" value="PPM-type_phosphatase-like_dom"/>
</dbReference>
<dbReference type="PANTHER" id="PTHR47992">
    <property type="entry name" value="PROTEIN PHOSPHATASE"/>
    <property type="match status" value="1"/>
</dbReference>
<dbReference type="Pfam" id="PF00481">
    <property type="entry name" value="PP2C"/>
    <property type="match status" value="1"/>
</dbReference>
<dbReference type="SMART" id="SM00332">
    <property type="entry name" value="PP2Cc"/>
    <property type="match status" value="1"/>
</dbReference>
<dbReference type="SUPFAM" id="SSF81606">
    <property type="entry name" value="PP2C-like"/>
    <property type="match status" value="1"/>
</dbReference>
<dbReference type="PROSITE" id="PS51746">
    <property type="entry name" value="PPM_2"/>
    <property type="match status" value="1"/>
</dbReference>
<feature type="chain" id="PRO_0000363316" description="Probable protein phosphatase 2C 69">
    <location>
        <begin position="1"/>
        <end position="422"/>
    </location>
</feature>
<feature type="domain" description="PPM-type phosphatase" evidence="2">
    <location>
        <begin position="45"/>
        <end position="294"/>
    </location>
</feature>
<feature type="binding site" evidence="1">
    <location>
        <position position="70"/>
    </location>
    <ligand>
        <name>Mn(2+)</name>
        <dbReference type="ChEBI" id="CHEBI:29035"/>
        <label>1</label>
    </ligand>
</feature>
<feature type="binding site" evidence="1">
    <location>
        <position position="70"/>
    </location>
    <ligand>
        <name>Mn(2+)</name>
        <dbReference type="ChEBI" id="CHEBI:29035"/>
        <label>2</label>
    </ligand>
</feature>
<feature type="binding site" evidence="1">
    <location>
        <position position="71"/>
    </location>
    <ligand>
        <name>Mn(2+)</name>
        <dbReference type="ChEBI" id="CHEBI:29035"/>
        <label>1</label>
    </ligand>
</feature>
<feature type="binding site" evidence="1">
    <location>
        <position position="246"/>
    </location>
    <ligand>
        <name>Mn(2+)</name>
        <dbReference type="ChEBI" id="CHEBI:29035"/>
        <label>2</label>
    </ligand>
</feature>
<feature type="binding site" evidence="1">
    <location>
        <position position="285"/>
    </location>
    <ligand>
        <name>Mn(2+)</name>
        <dbReference type="ChEBI" id="CHEBI:29035"/>
        <label>2</label>
    </ligand>
</feature>
<feature type="sequence conflict" description="In Ref. 5; AK108735." evidence="3" ref="5">
    <original>T</original>
    <variation>M</variation>
    <location>
        <position position="4"/>
    </location>
</feature>
<feature type="sequence conflict" description="In Ref. 5; AK108735." evidence="3" ref="5">
    <original>V</original>
    <variation>A</variation>
    <location>
        <position position="177"/>
    </location>
</feature>
<evidence type="ECO:0000250" key="1"/>
<evidence type="ECO:0000255" key="2">
    <source>
        <dbReference type="PROSITE-ProRule" id="PRU01082"/>
    </source>
</evidence>
<evidence type="ECO:0000305" key="3"/>
<reference key="1">
    <citation type="journal article" date="2005" name="Nature">
        <title>The map-based sequence of the rice genome.</title>
        <authorList>
            <consortium name="International rice genome sequencing project (IRGSP)"/>
        </authorList>
    </citation>
    <scope>NUCLEOTIDE SEQUENCE [LARGE SCALE GENOMIC DNA]</scope>
    <source>
        <strain>cv. Nipponbare</strain>
    </source>
</reference>
<reference key="2">
    <citation type="journal article" date="2008" name="Nucleic Acids Res.">
        <title>The rice annotation project database (RAP-DB): 2008 update.</title>
        <authorList>
            <consortium name="The rice annotation project (RAP)"/>
        </authorList>
    </citation>
    <scope>GENOME REANNOTATION</scope>
    <source>
        <strain>cv. Nipponbare</strain>
    </source>
</reference>
<reference key="3">
    <citation type="journal article" date="2013" name="Rice">
        <title>Improvement of the Oryza sativa Nipponbare reference genome using next generation sequence and optical map data.</title>
        <authorList>
            <person name="Kawahara Y."/>
            <person name="de la Bastide M."/>
            <person name="Hamilton J.P."/>
            <person name="Kanamori H."/>
            <person name="McCombie W.R."/>
            <person name="Ouyang S."/>
            <person name="Schwartz D.C."/>
            <person name="Tanaka T."/>
            <person name="Wu J."/>
            <person name="Zhou S."/>
            <person name="Childs K.L."/>
            <person name="Davidson R.M."/>
            <person name="Lin H."/>
            <person name="Quesada-Ocampo L."/>
            <person name="Vaillancourt B."/>
            <person name="Sakai H."/>
            <person name="Lee S.S."/>
            <person name="Kim J."/>
            <person name="Numa H."/>
            <person name="Itoh T."/>
            <person name="Buell C.R."/>
            <person name="Matsumoto T."/>
        </authorList>
    </citation>
    <scope>GENOME REANNOTATION</scope>
    <source>
        <strain>cv. Nipponbare</strain>
    </source>
</reference>
<reference key="4">
    <citation type="journal article" date="2005" name="PLoS Biol.">
        <title>The genomes of Oryza sativa: a history of duplications.</title>
        <authorList>
            <person name="Yu J."/>
            <person name="Wang J."/>
            <person name="Lin W."/>
            <person name="Li S."/>
            <person name="Li H."/>
            <person name="Zhou J."/>
            <person name="Ni P."/>
            <person name="Dong W."/>
            <person name="Hu S."/>
            <person name="Zeng C."/>
            <person name="Zhang J."/>
            <person name="Zhang Y."/>
            <person name="Li R."/>
            <person name="Xu Z."/>
            <person name="Li S."/>
            <person name="Li X."/>
            <person name="Zheng H."/>
            <person name="Cong L."/>
            <person name="Lin L."/>
            <person name="Yin J."/>
            <person name="Geng J."/>
            <person name="Li G."/>
            <person name="Shi J."/>
            <person name="Liu J."/>
            <person name="Lv H."/>
            <person name="Li J."/>
            <person name="Wang J."/>
            <person name="Deng Y."/>
            <person name="Ran L."/>
            <person name="Shi X."/>
            <person name="Wang X."/>
            <person name="Wu Q."/>
            <person name="Li C."/>
            <person name="Ren X."/>
            <person name="Wang J."/>
            <person name="Wang X."/>
            <person name="Li D."/>
            <person name="Liu D."/>
            <person name="Zhang X."/>
            <person name="Ji Z."/>
            <person name="Zhao W."/>
            <person name="Sun Y."/>
            <person name="Zhang Z."/>
            <person name="Bao J."/>
            <person name="Han Y."/>
            <person name="Dong L."/>
            <person name="Ji J."/>
            <person name="Chen P."/>
            <person name="Wu S."/>
            <person name="Liu J."/>
            <person name="Xiao Y."/>
            <person name="Bu D."/>
            <person name="Tan J."/>
            <person name="Yang L."/>
            <person name="Ye C."/>
            <person name="Zhang J."/>
            <person name="Xu J."/>
            <person name="Zhou Y."/>
            <person name="Yu Y."/>
            <person name="Zhang B."/>
            <person name="Zhuang S."/>
            <person name="Wei H."/>
            <person name="Liu B."/>
            <person name="Lei M."/>
            <person name="Yu H."/>
            <person name="Li Y."/>
            <person name="Xu H."/>
            <person name="Wei S."/>
            <person name="He X."/>
            <person name="Fang L."/>
            <person name="Zhang Z."/>
            <person name="Zhang Y."/>
            <person name="Huang X."/>
            <person name="Su Z."/>
            <person name="Tong W."/>
            <person name="Li J."/>
            <person name="Tong Z."/>
            <person name="Li S."/>
            <person name="Ye J."/>
            <person name="Wang L."/>
            <person name="Fang L."/>
            <person name="Lei T."/>
            <person name="Chen C.-S."/>
            <person name="Chen H.-C."/>
            <person name="Xu Z."/>
            <person name="Li H."/>
            <person name="Huang H."/>
            <person name="Zhang F."/>
            <person name="Xu H."/>
            <person name="Li N."/>
            <person name="Zhao C."/>
            <person name="Li S."/>
            <person name="Dong L."/>
            <person name="Huang Y."/>
            <person name="Li L."/>
            <person name="Xi Y."/>
            <person name="Qi Q."/>
            <person name="Li W."/>
            <person name="Zhang B."/>
            <person name="Hu W."/>
            <person name="Zhang Y."/>
            <person name="Tian X."/>
            <person name="Jiao Y."/>
            <person name="Liang X."/>
            <person name="Jin J."/>
            <person name="Gao L."/>
            <person name="Zheng W."/>
            <person name="Hao B."/>
            <person name="Liu S.-M."/>
            <person name="Wang W."/>
            <person name="Yuan L."/>
            <person name="Cao M."/>
            <person name="McDermott J."/>
            <person name="Samudrala R."/>
            <person name="Wang J."/>
            <person name="Wong G.K.-S."/>
            <person name="Yang H."/>
        </authorList>
    </citation>
    <scope>NUCLEOTIDE SEQUENCE [LARGE SCALE GENOMIC DNA]</scope>
    <source>
        <strain>cv. Nipponbare</strain>
    </source>
</reference>
<reference key="5">
    <citation type="journal article" date="2003" name="Science">
        <title>Collection, mapping, and annotation of over 28,000 cDNA clones from japonica rice.</title>
        <authorList>
            <consortium name="The rice full-length cDNA consortium"/>
        </authorList>
    </citation>
    <scope>NUCLEOTIDE SEQUENCE [LARGE SCALE MRNA]</scope>
    <source>
        <strain>cv. Nipponbare</strain>
    </source>
</reference>
<reference key="6">
    <citation type="journal article" date="2008" name="BMC Genomics">
        <title>Genome-wide and expression analysis of protein phosphatase 2C in rice and Arabidopsis.</title>
        <authorList>
            <person name="Xue T."/>
            <person name="Wang D."/>
            <person name="Zhang S."/>
            <person name="Ehlting J."/>
            <person name="Ni F."/>
            <person name="Jacab S."/>
            <person name="Zheng C."/>
            <person name="Zhong Y."/>
        </authorList>
    </citation>
    <scope>GENE FAMILY</scope>
    <scope>NOMENCLATURE</scope>
</reference>
<proteinExistence type="evidence at transcript level"/>
<keyword id="KW-0378">Hydrolase</keyword>
<keyword id="KW-0460">Magnesium</keyword>
<keyword id="KW-0464">Manganese</keyword>
<keyword id="KW-0479">Metal-binding</keyword>
<keyword id="KW-0904">Protein phosphatase</keyword>
<keyword id="KW-1185">Reference proteome</keyword>
<gene>
    <name type="ordered locus">Os09g0459600</name>
    <name type="ordered locus">LOC_Os09g28560</name>
    <name type="ORF">B1045B05.36</name>
    <name type="ORF">OsJ_028485</name>
    <name type="ORF">OSJNBa0054F02.14</name>
</gene>
<sequence>MAMTAAAVTVPLGVLLRREVTSERMERPDVLCGEAARSRKGEDFTLLLAEAGERVAGDPSTSFSVFALFDGHNGSGAAMYAKKNLLNNLLRAIPSGLSRDEWLAVLPRALVAAFVKTDKDFQAVAETSGTTVTFVVIDEWVVTVASVGDSRCILESADGSLYHLSADHRFDSNQDEVQRVTACGSKVGKLNLVGGPEVGPLRCWPGGLCLSRSIGDMDVGECIIPVPHVKQVKLSNAGGRIIIASDGVWDDLTFEMALECSRGFPSDIAANRIVNEAIHPRGLRDDTTCIVVDILPPEKLAPSPPTKRQGKIVFNNMFRRKHTDVSFILDREYAEPDEVEEIFDDGSAMLSKRLAAGYALQSMFEPFSCAVCQVQLKAGQGISVHSNPLQHEKLQGWQGPFLCQSCNEKKDAIEGKRPPRDS</sequence>
<protein>
    <recommendedName>
        <fullName>Probable protein phosphatase 2C 69</fullName>
        <shortName>OsPP2C69</shortName>
        <ecNumber>3.1.3.16</ecNumber>
    </recommendedName>
</protein>